<keyword id="KW-0325">Glycoprotein</keyword>
<keyword id="KW-1040">Host Golgi apparatus</keyword>
<keyword id="KW-1043">Host membrane</keyword>
<keyword id="KW-0472">Membrane</keyword>
<keyword id="KW-0812">Transmembrane</keyword>
<keyword id="KW-1133">Transmembrane helix</keyword>
<keyword id="KW-0261">Viral envelope protein</keyword>
<keyword id="KW-0468">Viral matrix protein</keyword>
<keyword id="KW-0946">Virion</keyword>
<organismHost>
    <name type="scientific">Sus scrofa</name>
    <name type="common">Pig</name>
    <dbReference type="NCBI Taxonomy" id="9823"/>
</organismHost>
<feature type="chain" id="PRO_0000106039" description="Membrane protein">
    <location>
        <begin position="1"/>
        <end position="226"/>
    </location>
</feature>
<feature type="topological domain" description="Virion surface" evidence="1">
    <location>
        <begin position="1"/>
        <end position="11"/>
    </location>
</feature>
<feature type="transmembrane region" description="Helical" evidence="1">
    <location>
        <begin position="12"/>
        <end position="32"/>
    </location>
</feature>
<feature type="topological domain" description="Intravirion" evidence="1">
    <location>
        <begin position="33"/>
        <end position="41"/>
    </location>
</feature>
<feature type="transmembrane region" description="Helical" evidence="1">
    <location>
        <begin position="42"/>
        <end position="62"/>
    </location>
</feature>
<feature type="topological domain" description="Virion surface" evidence="1">
    <location>
        <begin position="63"/>
        <end position="75"/>
    </location>
</feature>
<feature type="transmembrane region" description="Helical" evidence="1">
    <location>
        <begin position="76"/>
        <end position="96"/>
    </location>
</feature>
<feature type="topological domain" description="Intravirion" evidence="1">
    <location>
        <begin position="97"/>
        <end position="226"/>
    </location>
</feature>
<feature type="region of interest" description="Interaction with N protein" evidence="1">
    <location>
        <begin position="200"/>
        <end position="216"/>
    </location>
</feature>
<comment type="function">
    <text evidence="1 2">Component of the viral envelope that plays a central role in virus morphogenesis and assembly via its interactions with other viral proteins.</text>
</comment>
<comment type="subunit">
    <text evidence="1 2">Homomultimer. Interacts with envelope E protein in the budding compartment of the host cell, which is located between endoplasmic reticulum and the Golgi complex. Forms a complex with HE and S proteins. Interacts with nucleocapsid N protein. This interaction probably participates in RNA packaging into the virus.</text>
</comment>
<comment type="subcellular location">
    <subcellularLocation>
        <location evidence="1">Virion membrane</location>
        <topology evidence="1">Multi-pass membrane protein</topology>
    </subcellularLocation>
    <subcellularLocation>
        <location evidence="1">Host Golgi apparatus membrane</location>
        <topology evidence="1">Multi-pass membrane protein</topology>
    </subcellularLocation>
    <text evidence="1">Largely embedded in the lipid bilayer.</text>
</comment>
<comment type="similarity">
    <text evidence="1">Belongs to the alphacoronaviruses M protein family.</text>
</comment>
<protein>
    <recommendedName>
        <fullName evidence="1">Membrane protein</fullName>
        <shortName evidence="1">M protein</shortName>
    </recommendedName>
    <alternativeName>
        <fullName evidence="1">E1 glycoprotein</fullName>
    </alternativeName>
    <alternativeName>
        <fullName evidence="1">Matrix glycoprotein</fullName>
    </alternativeName>
    <alternativeName>
        <fullName evidence="1">Membrane glycoprotein</fullName>
    </alternativeName>
</protein>
<gene>
    <name evidence="1" type="primary">M</name>
    <name type="ORF">5</name>
</gene>
<name>VME1_PEDVB</name>
<accession>P59770</accession>
<accession>Q07504</accession>
<sequence length="226" mass="25360">MSNGSIPVDEVIEHLRNWNFTWNIILTILLVVLQYGHYKYSVFLYGVKMAILWILWPLVLALSLFDAWASFQVNWVFFAFSILMACITLMLWIMYFVNSIRLWRRTHSWWSFNPETDALLTTSVMGRQVCIPVLGAPTGVTLTLLSGTLLVEGYKVATGVQVSQLPNFVTVAKATTTIVYGRVGRSVNASSGTGWAFYVRSKHGDYSAVSNPSAVLTDSEKVPHLV</sequence>
<dbReference type="EMBL" id="Z24733">
    <property type="protein sequence ID" value="CAA80857.1"/>
    <property type="molecule type" value="Genomic_RNA"/>
</dbReference>
<dbReference type="EMBL" id="Z14976">
    <property type="protein sequence ID" value="CAA78699.1"/>
    <property type="molecule type" value="Genomic_RNA"/>
</dbReference>
<dbReference type="PIR" id="S37434">
    <property type="entry name" value="S37434"/>
</dbReference>
<dbReference type="SMR" id="P59770"/>
<dbReference type="GO" id="GO:0044178">
    <property type="term" value="C:host cell Golgi membrane"/>
    <property type="evidence" value="ECO:0007669"/>
    <property type="project" value="UniProtKB-SubCell"/>
</dbReference>
<dbReference type="GO" id="GO:0016020">
    <property type="term" value="C:membrane"/>
    <property type="evidence" value="ECO:0007669"/>
    <property type="project" value="UniProtKB-UniRule"/>
</dbReference>
<dbReference type="GO" id="GO:0019031">
    <property type="term" value="C:viral envelope"/>
    <property type="evidence" value="ECO:0007669"/>
    <property type="project" value="UniProtKB-UniRule"/>
</dbReference>
<dbReference type="GO" id="GO:0055036">
    <property type="term" value="C:virion membrane"/>
    <property type="evidence" value="ECO:0007669"/>
    <property type="project" value="UniProtKB-SubCell"/>
</dbReference>
<dbReference type="GO" id="GO:0039660">
    <property type="term" value="F:structural constituent of virion"/>
    <property type="evidence" value="ECO:0007669"/>
    <property type="project" value="UniProtKB-UniRule"/>
</dbReference>
<dbReference type="CDD" id="cd21564">
    <property type="entry name" value="alphaCoV_M"/>
    <property type="match status" value="1"/>
</dbReference>
<dbReference type="HAMAP" id="MF_04201">
    <property type="entry name" value="ALPHA_CORONA_M"/>
    <property type="match status" value="1"/>
</dbReference>
<dbReference type="InterPro" id="IPR042551">
    <property type="entry name" value="ALPHA_CORONA_M"/>
</dbReference>
<dbReference type="InterPro" id="IPR002574">
    <property type="entry name" value="M_CoV"/>
</dbReference>
<dbReference type="Pfam" id="PF01635">
    <property type="entry name" value="CoV_M"/>
    <property type="match status" value="1"/>
</dbReference>
<dbReference type="PROSITE" id="PS51927">
    <property type="entry name" value="COV_M"/>
    <property type="match status" value="1"/>
</dbReference>
<reference key="1">
    <citation type="journal article" date="1994" name="Virology">
        <title>Sequence analysis of the porcine epidemic diarrhea virus genome between the nucleocapsid and spike protein genes reveals a polymorphic ORF.</title>
        <authorList>
            <person name="Duarte M."/>
            <person name="Tobler K."/>
            <person name="Bridgen A."/>
            <person name="Rasschaert D."/>
            <person name="Ackermann M."/>
            <person name="Laude H."/>
        </authorList>
    </citation>
    <scope>NUCLEOTIDE SEQUENCE [GENOMIC RNA]</scope>
</reference>
<reference key="2">
    <citation type="journal article" date="1993" name="J. Gen. Virol.">
        <title>Sequence determination of the nucleocapsid protein gene of the porcine epidemic diarrhea virus confirms that this virus is a coronavirus related to human coronavirus 229E and porcine transmissible gastroenteritis virus.</title>
        <authorList>
            <person name="Bridgen A."/>
            <person name="Duarte M."/>
            <person name="Tobler K."/>
            <person name="Laude H."/>
            <person name="Ackermann M."/>
        </authorList>
    </citation>
    <scope>NUCLEOTIDE SEQUENCE [GENOMIC RNA] OF 220-226</scope>
</reference>
<organism>
    <name type="scientific">Porcine epidemic diarrhea virus (strain Br1/87)</name>
    <name type="common">PEDV</name>
    <dbReference type="NCBI Taxonomy" id="229033"/>
    <lineage>
        <taxon>Viruses</taxon>
        <taxon>Riboviria</taxon>
        <taxon>Orthornavirae</taxon>
        <taxon>Pisuviricota</taxon>
        <taxon>Pisoniviricetes</taxon>
        <taxon>Nidovirales</taxon>
        <taxon>Cornidovirineae</taxon>
        <taxon>Coronaviridae</taxon>
        <taxon>Orthocoronavirinae</taxon>
        <taxon>Alphacoronavirus</taxon>
        <taxon>Pedacovirus</taxon>
        <taxon>Porcine epidemic diarrhea virus</taxon>
    </lineage>
</organism>
<evidence type="ECO:0000255" key="1">
    <source>
        <dbReference type="HAMAP-Rule" id="MF_04201"/>
    </source>
</evidence>
<evidence type="ECO:0000255" key="2">
    <source>
        <dbReference type="PROSITE-ProRule" id="PRU01275"/>
    </source>
</evidence>
<proteinExistence type="inferred from homology"/>